<comment type="subunit">
    <text evidence="1">Homotetramer.</text>
</comment>
<proteinExistence type="inferred from homology"/>
<organism>
    <name type="scientific">Clostridium acetobutylicum (strain ATCC 824 / DSM 792 / JCM 1419 / IAM 19013 / LMG 5710 / NBRC 13948 / NRRL B-527 / VKM B-1787 / 2291 / W)</name>
    <dbReference type="NCBI Taxonomy" id="272562"/>
    <lineage>
        <taxon>Bacteria</taxon>
        <taxon>Bacillati</taxon>
        <taxon>Bacillota</taxon>
        <taxon>Clostridia</taxon>
        <taxon>Eubacteriales</taxon>
        <taxon>Clostridiaceae</taxon>
        <taxon>Clostridium</taxon>
    </lineage>
</organism>
<protein>
    <recommendedName>
        <fullName evidence="1">Single-stranded DNA-binding protein 2</fullName>
        <shortName evidence="1">SSB 2</shortName>
    </recommendedName>
</protein>
<sequence length="133" mass="14980">MNKTILIGRLTKDPELKYIPNTGTATCNFTLAVDRRFKKEGQQEADFIPIVVWGKQAESTANYMSKGKLMGVSGRIQTRSYDAKDGTRRYVTEVVAEEVKFLEWGKDSNIENVDFGVPVQEDITPVDNSDIPF</sequence>
<reference key="1">
    <citation type="journal article" date="2001" name="J. Bacteriol.">
        <title>Genome sequence and comparative analysis of the solvent-producing bacterium Clostridium acetobutylicum.</title>
        <authorList>
            <person name="Noelling J."/>
            <person name="Breton G."/>
            <person name="Omelchenko M.V."/>
            <person name="Makarova K.S."/>
            <person name="Zeng Q."/>
            <person name="Gibson R."/>
            <person name="Lee H.M."/>
            <person name="Dubois J."/>
            <person name="Qiu D."/>
            <person name="Hitti J."/>
            <person name="Wolf Y.I."/>
            <person name="Tatusov R.L."/>
            <person name="Sabathe F."/>
            <person name="Doucette-Stamm L.A."/>
            <person name="Soucaille P."/>
            <person name="Daly M.J."/>
            <person name="Bennett G.N."/>
            <person name="Koonin E.V."/>
            <person name="Smith D.R."/>
        </authorList>
    </citation>
    <scope>NUCLEOTIDE SEQUENCE [LARGE SCALE GENOMIC DNA]</scope>
    <source>
        <strain>ATCC 824 / DSM 792 / JCM 1419 / IAM 19013 / LMG 5710 / NBRC 13948 / NRRL B-527 / VKM B-1787 / 2291 / W</strain>
    </source>
</reference>
<gene>
    <name type="primary">ssb2</name>
    <name type="ordered locus">CA_C1919</name>
</gene>
<feature type="chain" id="PRO_0000096029" description="Single-stranded DNA-binding protein 2">
    <location>
        <begin position="1"/>
        <end position="133"/>
    </location>
</feature>
<feature type="domain" description="SSB" evidence="1">
    <location>
        <begin position="1"/>
        <end position="103"/>
    </location>
</feature>
<name>SSB2_CLOAB</name>
<evidence type="ECO:0000255" key="1">
    <source>
        <dbReference type="HAMAP-Rule" id="MF_00984"/>
    </source>
</evidence>
<dbReference type="EMBL" id="AE001437">
    <property type="protein sequence ID" value="AAK79882.1"/>
    <property type="molecule type" value="Genomic_DNA"/>
</dbReference>
<dbReference type="PIR" id="G97136">
    <property type="entry name" value="G97136"/>
</dbReference>
<dbReference type="RefSeq" id="NP_348542.1">
    <property type="nucleotide sequence ID" value="NC_003030.1"/>
</dbReference>
<dbReference type="SMR" id="Q97HT8"/>
<dbReference type="STRING" id="272562.CA_C1919"/>
<dbReference type="KEGG" id="cac:CA_C1919"/>
<dbReference type="PATRIC" id="fig|272562.8.peg.2121"/>
<dbReference type="eggNOG" id="COG0629">
    <property type="taxonomic scope" value="Bacteria"/>
</dbReference>
<dbReference type="HOGENOM" id="CLU_078758_6_1_9"/>
<dbReference type="OrthoDB" id="9809878at2"/>
<dbReference type="Proteomes" id="UP000000814">
    <property type="component" value="Chromosome"/>
</dbReference>
<dbReference type="GO" id="GO:0009295">
    <property type="term" value="C:nucleoid"/>
    <property type="evidence" value="ECO:0007669"/>
    <property type="project" value="TreeGrafter"/>
</dbReference>
<dbReference type="GO" id="GO:0003697">
    <property type="term" value="F:single-stranded DNA binding"/>
    <property type="evidence" value="ECO:0007669"/>
    <property type="project" value="UniProtKB-UniRule"/>
</dbReference>
<dbReference type="GO" id="GO:0006260">
    <property type="term" value="P:DNA replication"/>
    <property type="evidence" value="ECO:0007669"/>
    <property type="project" value="InterPro"/>
</dbReference>
<dbReference type="CDD" id="cd04496">
    <property type="entry name" value="SSB_OBF"/>
    <property type="match status" value="1"/>
</dbReference>
<dbReference type="Gene3D" id="2.40.50.140">
    <property type="entry name" value="Nucleic acid-binding proteins"/>
    <property type="match status" value="1"/>
</dbReference>
<dbReference type="HAMAP" id="MF_00984">
    <property type="entry name" value="SSB"/>
    <property type="match status" value="1"/>
</dbReference>
<dbReference type="InterPro" id="IPR012340">
    <property type="entry name" value="NA-bd_OB-fold"/>
</dbReference>
<dbReference type="InterPro" id="IPR000424">
    <property type="entry name" value="Primosome_PriB/ssb"/>
</dbReference>
<dbReference type="InterPro" id="IPR011344">
    <property type="entry name" value="ssDNA-bd"/>
</dbReference>
<dbReference type="NCBIfam" id="TIGR00621">
    <property type="entry name" value="ssb"/>
    <property type="match status" value="1"/>
</dbReference>
<dbReference type="PANTHER" id="PTHR10302">
    <property type="entry name" value="SINGLE-STRANDED DNA-BINDING PROTEIN"/>
    <property type="match status" value="1"/>
</dbReference>
<dbReference type="PANTHER" id="PTHR10302:SF27">
    <property type="entry name" value="SINGLE-STRANDED DNA-BINDING PROTEIN"/>
    <property type="match status" value="1"/>
</dbReference>
<dbReference type="Pfam" id="PF00436">
    <property type="entry name" value="SSB"/>
    <property type="match status" value="1"/>
</dbReference>
<dbReference type="PIRSF" id="PIRSF002070">
    <property type="entry name" value="SSB"/>
    <property type="match status" value="1"/>
</dbReference>
<dbReference type="SUPFAM" id="SSF50249">
    <property type="entry name" value="Nucleic acid-binding proteins"/>
    <property type="match status" value="1"/>
</dbReference>
<dbReference type="PROSITE" id="PS50935">
    <property type="entry name" value="SSB"/>
    <property type="match status" value="1"/>
</dbReference>
<accession>Q97HT8</accession>
<keyword id="KW-0238">DNA-binding</keyword>
<keyword id="KW-1185">Reference proteome</keyword>